<gene>
    <name evidence="1" type="primary">rpsG</name>
    <name type="ordered locus">BP3609</name>
</gene>
<comment type="function">
    <text evidence="1">One of the primary rRNA binding proteins, it binds directly to 16S rRNA where it nucleates assembly of the head domain of the 30S subunit. Is located at the subunit interface close to the decoding center, probably blocks exit of the E-site tRNA.</text>
</comment>
<comment type="subunit">
    <text evidence="1">Part of the 30S ribosomal subunit. Contacts proteins S9 and S11.</text>
</comment>
<comment type="similarity">
    <text evidence="1">Belongs to the universal ribosomal protein uS7 family.</text>
</comment>
<organism>
    <name type="scientific">Bordetella pertussis (strain Tohama I / ATCC BAA-589 / NCTC 13251)</name>
    <dbReference type="NCBI Taxonomy" id="257313"/>
    <lineage>
        <taxon>Bacteria</taxon>
        <taxon>Pseudomonadati</taxon>
        <taxon>Pseudomonadota</taxon>
        <taxon>Betaproteobacteria</taxon>
        <taxon>Burkholderiales</taxon>
        <taxon>Alcaligenaceae</taxon>
        <taxon>Bordetella</taxon>
    </lineage>
</organism>
<evidence type="ECO:0000255" key="1">
    <source>
        <dbReference type="HAMAP-Rule" id="MF_00480"/>
    </source>
</evidence>
<evidence type="ECO:0000305" key="2"/>
<keyword id="KW-1185">Reference proteome</keyword>
<keyword id="KW-0687">Ribonucleoprotein</keyword>
<keyword id="KW-0689">Ribosomal protein</keyword>
<keyword id="KW-0694">RNA-binding</keyword>
<keyword id="KW-0699">rRNA-binding</keyword>
<keyword id="KW-0820">tRNA-binding</keyword>
<proteinExistence type="inferred from homology"/>
<dbReference type="EMBL" id="BX640421">
    <property type="protein sequence ID" value="CAE43867.1"/>
    <property type="molecule type" value="Genomic_DNA"/>
</dbReference>
<dbReference type="RefSeq" id="NP_882119.1">
    <property type="nucleotide sequence ID" value="NC_002929.2"/>
</dbReference>
<dbReference type="RefSeq" id="WP_003806901.1">
    <property type="nucleotide sequence ID" value="NZ_CP039022.1"/>
</dbReference>
<dbReference type="SMR" id="Q7VTD6"/>
<dbReference type="STRING" id="257313.BP3609"/>
<dbReference type="PaxDb" id="257313-BP3609"/>
<dbReference type="GeneID" id="93206254"/>
<dbReference type="KEGG" id="bpe:BP3609"/>
<dbReference type="PATRIC" id="fig|257313.5.peg.3907"/>
<dbReference type="eggNOG" id="COG0049">
    <property type="taxonomic scope" value="Bacteria"/>
</dbReference>
<dbReference type="HOGENOM" id="CLU_072226_1_1_4"/>
<dbReference type="Proteomes" id="UP000002676">
    <property type="component" value="Chromosome"/>
</dbReference>
<dbReference type="GO" id="GO:0015935">
    <property type="term" value="C:small ribosomal subunit"/>
    <property type="evidence" value="ECO:0007669"/>
    <property type="project" value="InterPro"/>
</dbReference>
<dbReference type="GO" id="GO:0019843">
    <property type="term" value="F:rRNA binding"/>
    <property type="evidence" value="ECO:0007669"/>
    <property type="project" value="UniProtKB-UniRule"/>
</dbReference>
<dbReference type="GO" id="GO:0003735">
    <property type="term" value="F:structural constituent of ribosome"/>
    <property type="evidence" value="ECO:0007669"/>
    <property type="project" value="InterPro"/>
</dbReference>
<dbReference type="GO" id="GO:0000049">
    <property type="term" value="F:tRNA binding"/>
    <property type="evidence" value="ECO:0007669"/>
    <property type="project" value="UniProtKB-UniRule"/>
</dbReference>
<dbReference type="GO" id="GO:0006412">
    <property type="term" value="P:translation"/>
    <property type="evidence" value="ECO:0007669"/>
    <property type="project" value="UniProtKB-UniRule"/>
</dbReference>
<dbReference type="CDD" id="cd14869">
    <property type="entry name" value="uS7_Bacteria"/>
    <property type="match status" value="1"/>
</dbReference>
<dbReference type="FunFam" id="1.10.455.10:FF:000001">
    <property type="entry name" value="30S ribosomal protein S7"/>
    <property type="match status" value="1"/>
</dbReference>
<dbReference type="Gene3D" id="1.10.455.10">
    <property type="entry name" value="Ribosomal protein S7 domain"/>
    <property type="match status" value="1"/>
</dbReference>
<dbReference type="HAMAP" id="MF_00480_B">
    <property type="entry name" value="Ribosomal_uS7_B"/>
    <property type="match status" value="1"/>
</dbReference>
<dbReference type="InterPro" id="IPR000235">
    <property type="entry name" value="Ribosomal_uS7"/>
</dbReference>
<dbReference type="InterPro" id="IPR005717">
    <property type="entry name" value="Ribosomal_uS7_bac/org-type"/>
</dbReference>
<dbReference type="InterPro" id="IPR020606">
    <property type="entry name" value="Ribosomal_uS7_CS"/>
</dbReference>
<dbReference type="InterPro" id="IPR023798">
    <property type="entry name" value="Ribosomal_uS7_dom"/>
</dbReference>
<dbReference type="InterPro" id="IPR036823">
    <property type="entry name" value="Ribosomal_uS7_dom_sf"/>
</dbReference>
<dbReference type="NCBIfam" id="TIGR01029">
    <property type="entry name" value="rpsG_bact"/>
    <property type="match status" value="1"/>
</dbReference>
<dbReference type="PANTHER" id="PTHR11205">
    <property type="entry name" value="RIBOSOMAL PROTEIN S7"/>
    <property type="match status" value="1"/>
</dbReference>
<dbReference type="Pfam" id="PF00177">
    <property type="entry name" value="Ribosomal_S7"/>
    <property type="match status" value="1"/>
</dbReference>
<dbReference type="PIRSF" id="PIRSF002122">
    <property type="entry name" value="RPS7p_RPS7a_RPS5e_RPS7o"/>
    <property type="match status" value="1"/>
</dbReference>
<dbReference type="SUPFAM" id="SSF47973">
    <property type="entry name" value="Ribosomal protein S7"/>
    <property type="match status" value="1"/>
</dbReference>
<dbReference type="PROSITE" id="PS00052">
    <property type="entry name" value="RIBOSOMAL_S7"/>
    <property type="match status" value="1"/>
</dbReference>
<name>RS7_BORPE</name>
<protein>
    <recommendedName>
        <fullName evidence="1">Small ribosomal subunit protein uS7</fullName>
    </recommendedName>
    <alternativeName>
        <fullName evidence="2">30S ribosomal protein S7</fullName>
    </alternativeName>
</protein>
<feature type="chain" id="PRO_0000124229" description="Small ribosomal subunit protein uS7">
    <location>
        <begin position="1"/>
        <end position="156"/>
    </location>
</feature>
<reference key="1">
    <citation type="journal article" date="2003" name="Nat. Genet.">
        <title>Comparative analysis of the genome sequences of Bordetella pertussis, Bordetella parapertussis and Bordetella bronchiseptica.</title>
        <authorList>
            <person name="Parkhill J."/>
            <person name="Sebaihia M."/>
            <person name="Preston A."/>
            <person name="Murphy L.D."/>
            <person name="Thomson N.R."/>
            <person name="Harris D.E."/>
            <person name="Holden M.T.G."/>
            <person name="Churcher C.M."/>
            <person name="Bentley S.D."/>
            <person name="Mungall K.L."/>
            <person name="Cerdeno-Tarraga A.-M."/>
            <person name="Temple L."/>
            <person name="James K.D."/>
            <person name="Harris B."/>
            <person name="Quail M.A."/>
            <person name="Achtman M."/>
            <person name="Atkin R."/>
            <person name="Baker S."/>
            <person name="Basham D."/>
            <person name="Bason N."/>
            <person name="Cherevach I."/>
            <person name="Chillingworth T."/>
            <person name="Collins M."/>
            <person name="Cronin A."/>
            <person name="Davis P."/>
            <person name="Doggett J."/>
            <person name="Feltwell T."/>
            <person name="Goble A."/>
            <person name="Hamlin N."/>
            <person name="Hauser H."/>
            <person name="Holroyd S."/>
            <person name="Jagels K."/>
            <person name="Leather S."/>
            <person name="Moule S."/>
            <person name="Norberczak H."/>
            <person name="O'Neil S."/>
            <person name="Ormond D."/>
            <person name="Price C."/>
            <person name="Rabbinowitsch E."/>
            <person name="Rutter S."/>
            <person name="Sanders M."/>
            <person name="Saunders D."/>
            <person name="Seeger K."/>
            <person name="Sharp S."/>
            <person name="Simmonds M."/>
            <person name="Skelton J."/>
            <person name="Squares R."/>
            <person name="Squares S."/>
            <person name="Stevens K."/>
            <person name="Unwin L."/>
            <person name="Whitehead S."/>
            <person name="Barrell B.G."/>
            <person name="Maskell D.J."/>
        </authorList>
    </citation>
    <scope>NUCLEOTIDE SEQUENCE [LARGE SCALE GENOMIC DNA]</scope>
    <source>
        <strain>Tohama I / ATCC BAA-589 / NCTC 13251</strain>
    </source>
</reference>
<sequence>MPRRREVPKREILPDPKFGSVELAKFMNVVMLDGKKAVAERIIYGALEQVQVKTGKDAIEVFNLAINNIKPIVEVKSRRVGGANYQVPVEVRPVRRLALAMRWLREAAKKRGEKSMDLRLAGELIDASEGRGAAMKKREDTHKMAEANKAFSHFRW</sequence>
<accession>Q7VTD6</accession>